<dbReference type="EC" id="3.4.25.2" evidence="1"/>
<dbReference type="EMBL" id="AE017340">
    <property type="protein sequence ID" value="AAV83290.1"/>
    <property type="molecule type" value="Genomic_DNA"/>
</dbReference>
<dbReference type="RefSeq" id="WP_011235683.1">
    <property type="nucleotide sequence ID" value="NC_006512.1"/>
</dbReference>
<dbReference type="SMR" id="Q5QV35"/>
<dbReference type="STRING" id="283942.IL2458"/>
<dbReference type="MEROPS" id="T01.007"/>
<dbReference type="GeneID" id="41337652"/>
<dbReference type="KEGG" id="ilo:IL2458"/>
<dbReference type="eggNOG" id="COG5405">
    <property type="taxonomic scope" value="Bacteria"/>
</dbReference>
<dbReference type="HOGENOM" id="CLU_093872_1_0_6"/>
<dbReference type="OrthoDB" id="9804884at2"/>
<dbReference type="Proteomes" id="UP000001171">
    <property type="component" value="Chromosome"/>
</dbReference>
<dbReference type="GO" id="GO:0009376">
    <property type="term" value="C:HslUV protease complex"/>
    <property type="evidence" value="ECO:0007669"/>
    <property type="project" value="UniProtKB-UniRule"/>
</dbReference>
<dbReference type="GO" id="GO:0005839">
    <property type="term" value="C:proteasome core complex"/>
    <property type="evidence" value="ECO:0007669"/>
    <property type="project" value="InterPro"/>
</dbReference>
<dbReference type="GO" id="GO:0046872">
    <property type="term" value="F:metal ion binding"/>
    <property type="evidence" value="ECO:0007669"/>
    <property type="project" value="UniProtKB-KW"/>
</dbReference>
<dbReference type="GO" id="GO:0004298">
    <property type="term" value="F:threonine-type endopeptidase activity"/>
    <property type="evidence" value="ECO:0007669"/>
    <property type="project" value="UniProtKB-KW"/>
</dbReference>
<dbReference type="GO" id="GO:0051603">
    <property type="term" value="P:proteolysis involved in protein catabolic process"/>
    <property type="evidence" value="ECO:0007669"/>
    <property type="project" value="InterPro"/>
</dbReference>
<dbReference type="CDD" id="cd01913">
    <property type="entry name" value="protease_HslV"/>
    <property type="match status" value="1"/>
</dbReference>
<dbReference type="FunFam" id="3.60.20.10:FF:000002">
    <property type="entry name" value="ATP-dependent protease subunit HslV"/>
    <property type="match status" value="1"/>
</dbReference>
<dbReference type="Gene3D" id="3.60.20.10">
    <property type="entry name" value="Glutamine Phosphoribosylpyrophosphate, subunit 1, domain 1"/>
    <property type="match status" value="1"/>
</dbReference>
<dbReference type="HAMAP" id="MF_00248">
    <property type="entry name" value="HslV"/>
    <property type="match status" value="1"/>
</dbReference>
<dbReference type="InterPro" id="IPR022281">
    <property type="entry name" value="ATP-dep_Prtase_HsIV_su"/>
</dbReference>
<dbReference type="InterPro" id="IPR029055">
    <property type="entry name" value="Ntn_hydrolases_N"/>
</dbReference>
<dbReference type="InterPro" id="IPR001353">
    <property type="entry name" value="Proteasome_sua/b"/>
</dbReference>
<dbReference type="InterPro" id="IPR023333">
    <property type="entry name" value="Proteasome_suB-type"/>
</dbReference>
<dbReference type="NCBIfam" id="TIGR03692">
    <property type="entry name" value="ATP_dep_HslV"/>
    <property type="match status" value="1"/>
</dbReference>
<dbReference type="NCBIfam" id="NF003964">
    <property type="entry name" value="PRK05456.1"/>
    <property type="match status" value="1"/>
</dbReference>
<dbReference type="PANTHER" id="PTHR32194:SF0">
    <property type="entry name" value="ATP-DEPENDENT PROTEASE SUBUNIT HSLV"/>
    <property type="match status" value="1"/>
</dbReference>
<dbReference type="PANTHER" id="PTHR32194">
    <property type="entry name" value="METALLOPROTEASE TLDD"/>
    <property type="match status" value="1"/>
</dbReference>
<dbReference type="Pfam" id="PF00227">
    <property type="entry name" value="Proteasome"/>
    <property type="match status" value="1"/>
</dbReference>
<dbReference type="PIRSF" id="PIRSF039093">
    <property type="entry name" value="HslV"/>
    <property type="match status" value="1"/>
</dbReference>
<dbReference type="SUPFAM" id="SSF56235">
    <property type="entry name" value="N-terminal nucleophile aminohydrolases (Ntn hydrolases)"/>
    <property type="match status" value="1"/>
</dbReference>
<dbReference type="PROSITE" id="PS51476">
    <property type="entry name" value="PROTEASOME_BETA_2"/>
    <property type="match status" value="1"/>
</dbReference>
<gene>
    <name evidence="1" type="primary">hslV</name>
    <name type="ordered locus">IL2458</name>
</gene>
<sequence length="185" mass="20027">MTTIVSVRRGDKVVIGGDGQVSLGNTVMKGNARKVRRLYHDKVLAGFAGGTADAFTLFERFESKLEQHQGNLMRAAVELAKDWRTDRALRRLEALLAVADKETSLIITGNGDVVQPENDLIAIGSGGPFAQSAARALLENTDLNARDIVQKALTIAGDICVYTNGNQTIEEEESIAEDKTKQGKK</sequence>
<comment type="function">
    <text evidence="1">Protease subunit of a proteasome-like degradation complex believed to be a general protein degrading machinery.</text>
</comment>
<comment type="catalytic activity">
    <reaction evidence="1">
        <text>ATP-dependent cleavage of peptide bonds with broad specificity.</text>
        <dbReference type="EC" id="3.4.25.2"/>
    </reaction>
</comment>
<comment type="activity regulation">
    <text evidence="1">Allosterically activated by HslU binding.</text>
</comment>
<comment type="subunit">
    <text evidence="1">A double ring-shaped homohexamer of HslV is capped on each side by a ring-shaped HslU homohexamer. The assembly of the HslU/HslV complex is dependent on binding of ATP.</text>
</comment>
<comment type="subcellular location">
    <subcellularLocation>
        <location evidence="1">Cytoplasm</location>
    </subcellularLocation>
</comment>
<comment type="similarity">
    <text evidence="1">Belongs to the peptidase T1B family. HslV subfamily.</text>
</comment>
<reference key="1">
    <citation type="journal article" date="2004" name="Proc. Natl. Acad. Sci. U.S.A.">
        <title>Genome sequence of the deep-sea gamma-proteobacterium Idiomarina loihiensis reveals amino acid fermentation as a source of carbon and energy.</title>
        <authorList>
            <person name="Hou S."/>
            <person name="Saw J.H."/>
            <person name="Lee K.S."/>
            <person name="Freitas T.A."/>
            <person name="Belisle C."/>
            <person name="Kawarabayasi Y."/>
            <person name="Donachie S.P."/>
            <person name="Pikina A."/>
            <person name="Galperin M.Y."/>
            <person name="Koonin E.V."/>
            <person name="Makarova K.S."/>
            <person name="Omelchenko M.V."/>
            <person name="Sorokin A."/>
            <person name="Wolf Y.I."/>
            <person name="Li Q.X."/>
            <person name="Keum Y.S."/>
            <person name="Campbell S."/>
            <person name="Denery J."/>
            <person name="Aizawa S."/>
            <person name="Shibata S."/>
            <person name="Malahoff A."/>
            <person name="Alam M."/>
        </authorList>
    </citation>
    <scope>NUCLEOTIDE SEQUENCE [LARGE SCALE GENOMIC DNA]</scope>
    <source>
        <strain>ATCC BAA-735 / DSM 15497 / L2-TR</strain>
    </source>
</reference>
<name>HSLV_IDILO</name>
<evidence type="ECO:0000255" key="1">
    <source>
        <dbReference type="HAMAP-Rule" id="MF_00248"/>
    </source>
</evidence>
<proteinExistence type="inferred from homology"/>
<keyword id="KW-0021">Allosteric enzyme</keyword>
<keyword id="KW-0963">Cytoplasm</keyword>
<keyword id="KW-0378">Hydrolase</keyword>
<keyword id="KW-0479">Metal-binding</keyword>
<keyword id="KW-0645">Protease</keyword>
<keyword id="KW-1185">Reference proteome</keyword>
<keyword id="KW-0915">Sodium</keyword>
<keyword id="KW-0888">Threonine protease</keyword>
<protein>
    <recommendedName>
        <fullName evidence="1">ATP-dependent protease subunit HslV</fullName>
        <ecNumber evidence="1">3.4.25.2</ecNumber>
    </recommendedName>
</protein>
<feature type="chain" id="PRO_1000012622" description="ATP-dependent protease subunit HslV">
    <location>
        <begin position="1"/>
        <end position="185"/>
    </location>
</feature>
<feature type="active site" evidence="1">
    <location>
        <position position="2"/>
    </location>
</feature>
<feature type="binding site" evidence="1">
    <location>
        <position position="157"/>
    </location>
    <ligand>
        <name>Na(+)</name>
        <dbReference type="ChEBI" id="CHEBI:29101"/>
    </ligand>
</feature>
<feature type="binding site" evidence="1">
    <location>
        <position position="160"/>
    </location>
    <ligand>
        <name>Na(+)</name>
        <dbReference type="ChEBI" id="CHEBI:29101"/>
    </ligand>
</feature>
<feature type="binding site" evidence="1">
    <location>
        <position position="163"/>
    </location>
    <ligand>
        <name>Na(+)</name>
        <dbReference type="ChEBI" id="CHEBI:29101"/>
    </ligand>
</feature>
<accession>Q5QV35</accession>
<organism>
    <name type="scientific">Idiomarina loihiensis (strain ATCC BAA-735 / DSM 15497 / L2-TR)</name>
    <dbReference type="NCBI Taxonomy" id="283942"/>
    <lineage>
        <taxon>Bacteria</taxon>
        <taxon>Pseudomonadati</taxon>
        <taxon>Pseudomonadota</taxon>
        <taxon>Gammaproteobacteria</taxon>
        <taxon>Alteromonadales</taxon>
        <taxon>Idiomarinaceae</taxon>
        <taxon>Idiomarina</taxon>
    </lineage>
</organism>